<gene>
    <name evidence="1" type="primary">coaA</name>
    <name type="ordered locus">Ecok1_39480</name>
    <name type="ORF">APECO1_2493</name>
</gene>
<proteinExistence type="inferred from homology"/>
<dbReference type="EC" id="2.7.1.33" evidence="1"/>
<dbReference type="EMBL" id="CP000468">
    <property type="protein sequence ID" value="ABJ03442.1"/>
    <property type="status" value="ALT_INIT"/>
    <property type="molecule type" value="Genomic_DNA"/>
</dbReference>
<dbReference type="RefSeq" id="WP_000023081.1">
    <property type="nucleotide sequence ID" value="NZ_CADILS010000126.1"/>
</dbReference>
<dbReference type="SMR" id="A1AIF2"/>
<dbReference type="GeneID" id="93777919"/>
<dbReference type="KEGG" id="ecv:APECO1_2493"/>
<dbReference type="HOGENOM" id="CLU_053818_1_1_6"/>
<dbReference type="UniPathway" id="UPA00241">
    <property type="reaction ID" value="UER00352"/>
</dbReference>
<dbReference type="Proteomes" id="UP000008216">
    <property type="component" value="Chromosome"/>
</dbReference>
<dbReference type="GO" id="GO:0005737">
    <property type="term" value="C:cytoplasm"/>
    <property type="evidence" value="ECO:0007669"/>
    <property type="project" value="UniProtKB-SubCell"/>
</dbReference>
<dbReference type="GO" id="GO:0005524">
    <property type="term" value="F:ATP binding"/>
    <property type="evidence" value="ECO:0007669"/>
    <property type="project" value="UniProtKB-UniRule"/>
</dbReference>
<dbReference type="GO" id="GO:0004594">
    <property type="term" value="F:pantothenate kinase activity"/>
    <property type="evidence" value="ECO:0007669"/>
    <property type="project" value="UniProtKB-UniRule"/>
</dbReference>
<dbReference type="GO" id="GO:0015937">
    <property type="term" value="P:coenzyme A biosynthetic process"/>
    <property type="evidence" value="ECO:0007669"/>
    <property type="project" value="UniProtKB-UniRule"/>
</dbReference>
<dbReference type="CDD" id="cd02025">
    <property type="entry name" value="PanK"/>
    <property type="match status" value="1"/>
</dbReference>
<dbReference type="FunFam" id="3.40.50.300:FF:000242">
    <property type="entry name" value="Pantothenate kinase"/>
    <property type="match status" value="1"/>
</dbReference>
<dbReference type="Gene3D" id="3.40.50.300">
    <property type="entry name" value="P-loop containing nucleotide triphosphate hydrolases"/>
    <property type="match status" value="1"/>
</dbReference>
<dbReference type="HAMAP" id="MF_00215">
    <property type="entry name" value="Pantothen_kinase_1"/>
    <property type="match status" value="1"/>
</dbReference>
<dbReference type="InterPro" id="IPR027417">
    <property type="entry name" value="P-loop_NTPase"/>
</dbReference>
<dbReference type="InterPro" id="IPR004566">
    <property type="entry name" value="PanK"/>
</dbReference>
<dbReference type="InterPro" id="IPR006083">
    <property type="entry name" value="PRK/URK"/>
</dbReference>
<dbReference type="NCBIfam" id="TIGR00554">
    <property type="entry name" value="panK_bact"/>
    <property type="match status" value="1"/>
</dbReference>
<dbReference type="PANTHER" id="PTHR10285">
    <property type="entry name" value="URIDINE KINASE"/>
    <property type="match status" value="1"/>
</dbReference>
<dbReference type="Pfam" id="PF00485">
    <property type="entry name" value="PRK"/>
    <property type="match status" value="1"/>
</dbReference>
<dbReference type="PIRSF" id="PIRSF000545">
    <property type="entry name" value="Pantothenate_kin"/>
    <property type="match status" value="1"/>
</dbReference>
<dbReference type="SUPFAM" id="SSF52540">
    <property type="entry name" value="P-loop containing nucleoside triphosphate hydrolases"/>
    <property type="match status" value="1"/>
</dbReference>
<keyword id="KW-0067">ATP-binding</keyword>
<keyword id="KW-0173">Coenzyme A biosynthesis</keyword>
<keyword id="KW-0963">Cytoplasm</keyword>
<keyword id="KW-0418">Kinase</keyword>
<keyword id="KW-0547">Nucleotide-binding</keyword>
<keyword id="KW-1185">Reference proteome</keyword>
<keyword id="KW-0808">Transferase</keyword>
<reference key="1">
    <citation type="journal article" date="2007" name="J. Bacteriol.">
        <title>The genome sequence of avian pathogenic Escherichia coli strain O1:K1:H7 shares strong similarities with human extraintestinal pathogenic E. coli genomes.</title>
        <authorList>
            <person name="Johnson T.J."/>
            <person name="Kariyawasam S."/>
            <person name="Wannemuehler Y."/>
            <person name="Mangiamele P."/>
            <person name="Johnson S.J."/>
            <person name="Doetkott C."/>
            <person name="Skyberg J.A."/>
            <person name="Lynne A.M."/>
            <person name="Johnson J.R."/>
            <person name="Nolan L.K."/>
        </authorList>
    </citation>
    <scope>NUCLEOTIDE SEQUENCE [LARGE SCALE GENOMIC DNA]</scope>
</reference>
<protein>
    <recommendedName>
        <fullName evidence="1">Pantothenate kinase</fullName>
        <ecNumber evidence="1">2.7.1.33</ecNumber>
    </recommendedName>
    <alternativeName>
        <fullName evidence="1">Pantothenic acid kinase</fullName>
    </alternativeName>
</protein>
<comment type="catalytic activity">
    <reaction evidence="1">
        <text>(R)-pantothenate + ATP = (R)-4'-phosphopantothenate + ADP + H(+)</text>
        <dbReference type="Rhea" id="RHEA:16373"/>
        <dbReference type="ChEBI" id="CHEBI:10986"/>
        <dbReference type="ChEBI" id="CHEBI:15378"/>
        <dbReference type="ChEBI" id="CHEBI:29032"/>
        <dbReference type="ChEBI" id="CHEBI:30616"/>
        <dbReference type="ChEBI" id="CHEBI:456216"/>
        <dbReference type="EC" id="2.7.1.33"/>
    </reaction>
</comment>
<comment type="pathway">
    <text evidence="1">Cofactor biosynthesis; coenzyme A biosynthesis; CoA from (R)-pantothenate: step 1/5.</text>
</comment>
<comment type="subcellular location">
    <subcellularLocation>
        <location evidence="1">Cytoplasm</location>
    </subcellularLocation>
</comment>
<comment type="similarity">
    <text evidence="1">Belongs to the prokaryotic pantothenate kinase family.</text>
</comment>
<comment type="sequence caution" evidence="2">
    <conflict type="erroneous initiation">
        <sequence resource="EMBL-CDS" id="ABJ03442"/>
    </conflict>
</comment>
<name>COAA_ECOK1</name>
<sequence length="316" mass="36360">MSIKEQTLMTPYLQFDRNQWAALRDSVPMTLSEDEIARLKGINEDLSLEEVAEIYLPLSRLLNFYISSNLRRQAVLEQFLGTNGQRIPYIISIAGSVAVGKSTTARVLQALLSRWPEHRRVELITTDGFLHPNQVLKERGLMKKKGFPESYDMHRLVKFVSDLKSGVPNVTAPVYSHLIYDVIPDGDKTVVQPDILILEGLNVLQSGMDYPHDPHHVFVSDFVDFSIYVDAPEDLLQTWYINRFLKFREGAFTDPDSYFHNYAKLTKEEAIKTAMTLWKEINWLNLKQNILPTRERASLILTKSANHAVEEVRLRK</sequence>
<feature type="chain" id="PRO_0000325553" description="Pantothenate kinase">
    <location>
        <begin position="1"/>
        <end position="316"/>
    </location>
</feature>
<feature type="binding site" evidence="1">
    <location>
        <begin position="95"/>
        <end position="102"/>
    </location>
    <ligand>
        <name>ATP</name>
        <dbReference type="ChEBI" id="CHEBI:30616"/>
    </ligand>
</feature>
<evidence type="ECO:0000255" key="1">
    <source>
        <dbReference type="HAMAP-Rule" id="MF_00215"/>
    </source>
</evidence>
<evidence type="ECO:0000305" key="2"/>
<organism>
    <name type="scientific">Escherichia coli O1:K1 / APEC</name>
    <dbReference type="NCBI Taxonomy" id="405955"/>
    <lineage>
        <taxon>Bacteria</taxon>
        <taxon>Pseudomonadati</taxon>
        <taxon>Pseudomonadota</taxon>
        <taxon>Gammaproteobacteria</taxon>
        <taxon>Enterobacterales</taxon>
        <taxon>Enterobacteriaceae</taxon>
        <taxon>Escherichia</taxon>
    </lineage>
</organism>
<accession>A1AIF2</accession>